<gene>
    <name evidence="1" type="primary">hisA</name>
    <name type="ordered locus">LEUM_1551</name>
</gene>
<protein>
    <recommendedName>
        <fullName evidence="1">1-(5-phosphoribosyl)-5-[(5-phosphoribosylamino)methylideneamino] imidazole-4-carboxamide isomerase</fullName>
        <ecNumber evidence="1">5.3.1.16</ecNumber>
    </recommendedName>
    <alternativeName>
        <fullName evidence="1">Phosphoribosylformimino-5-aminoimidazole carboxamide ribotide isomerase</fullName>
    </alternativeName>
</protein>
<organism>
    <name type="scientific">Leuconostoc mesenteroides subsp. mesenteroides (strain ATCC 8293 / DSM 20343 / BCRC 11652 / CCM 1803 / JCM 6124 / NCDO 523 / NBRC 100496 / NCIMB 8023 / NCTC 12954 / NRRL B-1118 / 37Y)</name>
    <dbReference type="NCBI Taxonomy" id="203120"/>
    <lineage>
        <taxon>Bacteria</taxon>
        <taxon>Bacillati</taxon>
        <taxon>Bacillota</taxon>
        <taxon>Bacilli</taxon>
        <taxon>Lactobacillales</taxon>
        <taxon>Lactobacillaceae</taxon>
        <taxon>Leuconostoc</taxon>
    </lineage>
</organism>
<dbReference type="EC" id="5.3.1.16" evidence="1"/>
<dbReference type="EMBL" id="CP000414">
    <property type="protein sequence ID" value="ABJ62643.1"/>
    <property type="molecule type" value="Genomic_DNA"/>
</dbReference>
<dbReference type="RefSeq" id="WP_011680216.1">
    <property type="nucleotide sequence ID" value="NC_008531.1"/>
</dbReference>
<dbReference type="SMR" id="Q03VX9"/>
<dbReference type="EnsemblBacteria" id="ABJ62643">
    <property type="protein sequence ID" value="ABJ62643"/>
    <property type="gene ID" value="LEUM_1551"/>
</dbReference>
<dbReference type="GeneID" id="29576051"/>
<dbReference type="KEGG" id="lme:LEUM_1551"/>
<dbReference type="eggNOG" id="COG0106">
    <property type="taxonomic scope" value="Bacteria"/>
</dbReference>
<dbReference type="HOGENOM" id="CLU_048577_1_2_9"/>
<dbReference type="UniPathway" id="UPA00031">
    <property type="reaction ID" value="UER00009"/>
</dbReference>
<dbReference type="Proteomes" id="UP000000362">
    <property type="component" value="Chromosome"/>
</dbReference>
<dbReference type="GO" id="GO:0005737">
    <property type="term" value="C:cytoplasm"/>
    <property type="evidence" value="ECO:0007669"/>
    <property type="project" value="UniProtKB-SubCell"/>
</dbReference>
<dbReference type="GO" id="GO:0003949">
    <property type="term" value="F:1-(5-phosphoribosyl)-5-[(5-phosphoribosylamino)methylideneamino]imidazole-4-carboxamide isomerase activity"/>
    <property type="evidence" value="ECO:0007669"/>
    <property type="project" value="UniProtKB-UniRule"/>
</dbReference>
<dbReference type="GO" id="GO:0000105">
    <property type="term" value="P:L-histidine biosynthetic process"/>
    <property type="evidence" value="ECO:0007669"/>
    <property type="project" value="UniProtKB-UniRule"/>
</dbReference>
<dbReference type="GO" id="GO:0000162">
    <property type="term" value="P:L-tryptophan biosynthetic process"/>
    <property type="evidence" value="ECO:0007669"/>
    <property type="project" value="TreeGrafter"/>
</dbReference>
<dbReference type="CDD" id="cd04732">
    <property type="entry name" value="HisA"/>
    <property type="match status" value="1"/>
</dbReference>
<dbReference type="FunFam" id="3.20.20.70:FF:000009">
    <property type="entry name" value="1-(5-phosphoribosyl)-5-[(5-phosphoribosylamino)methylideneamino] imidazole-4-carboxamide isomerase"/>
    <property type="match status" value="1"/>
</dbReference>
<dbReference type="Gene3D" id="3.20.20.70">
    <property type="entry name" value="Aldolase class I"/>
    <property type="match status" value="1"/>
</dbReference>
<dbReference type="HAMAP" id="MF_01014">
    <property type="entry name" value="HisA"/>
    <property type="match status" value="1"/>
</dbReference>
<dbReference type="InterPro" id="IPR013785">
    <property type="entry name" value="Aldolase_TIM"/>
</dbReference>
<dbReference type="InterPro" id="IPR006062">
    <property type="entry name" value="His_biosynth"/>
</dbReference>
<dbReference type="InterPro" id="IPR006063">
    <property type="entry name" value="HisA_bact_arch"/>
</dbReference>
<dbReference type="InterPro" id="IPR044524">
    <property type="entry name" value="Isoase_HisA-like"/>
</dbReference>
<dbReference type="InterPro" id="IPR023016">
    <property type="entry name" value="Isoase_HisA-like_bact"/>
</dbReference>
<dbReference type="InterPro" id="IPR011060">
    <property type="entry name" value="RibuloseP-bd_barrel"/>
</dbReference>
<dbReference type="NCBIfam" id="TIGR00007">
    <property type="entry name" value="1-(5-phosphoribosyl)-5-[(5-phosphoribosylamino)methylideneamino]imidazole-4-carboxamide isomerase"/>
    <property type="match status" value="1"/>
</dbReference>
<dbReference type="PANTHER" id="PTHR43090">
    <property type="entry name" value="1-(5-PHOSPHORIBOSYL)-5-[(5-PHOSPHORIBOSYLAMINO)METHYLIDENEAMINO] IMIDAZOLE-4-CARBOXAMIDE ISOMERASE"/>
    <property type="match status" value="1"/>
</dbReference>
<dbReference type="PANTHER" id="PTHR43090:SF2">
    <property type="entry name" value="1-(5-PHOSPHORIBOSYL)-5-[(5-PHOSPHORIBOSYLAMINO)METHYLIDENEAMINO] IMIDAZOLE-4-CARBOXAMIDE ISOMERASE"/>
    <property type="match status" value="1"/>
</dbReference>
<dbReference type="Pfam" id="PF00977">
    <property type="entry name" value="His_biosynth"/>
    <property type="match status" value="1"/>
</dbReference>
<dbReference type="SUPFAM" id="SSF51366">
    <property type="entry name" value="Ribulose-phoshate binding barrel"/>
    <property type="match status" value="1"/>
</dbReference>
<sequence length="238" mass="25713">MIFPAIDLLNGQSVRLYQGDYEKETTINPDPLKQAKQIESAGLKHLHLVDLDGAKEGKPVNLNVIQSLREQTNLFIELGGGIRTLEQVNQYLNIGINRVIIGSAALTHPELVRTAVAKYGSDKIVVGVDGRDEKVATQGWLENSDTSFDDIVEAMLSVGVSNFVVTDIARDGTLSGPNIELLSRLQNKFPKSNIIASGGIANIKNVTDLQASGIHDIIVGRALYDGDVTLAQLKEVDG</sequence>
<reference key="1">
    <citation type="journal article" date="2006" name="Proc. Natl. Acad. Sci. U.S.A.">
        <title>Comparative genomics of the lactic acid bacteria.</title>
        <authorList>
            <person name="Makarova K.S."/>
            <person name="Slesarev A."/>
            <person name="Wolf Y.I."/>
            <person name="Sorokin A."/>
            <person name="Mirkin B."/>
            <person name="Koonin E.V."/>
            <person name="Pavlov A."/>
            <person name="Pavlova N."/>
            <person name="Karamychev V."/>
            <person name="Polouchine N."/>
            <person name="Shakhova V."/>
            <person name="Grigoriev I."/>
            <person name="Lou Y."/>
            <person name="Rohksar D."/>
            <person name="Lucas S."/>
            <person name="Huang K."/>
            <person name="Goodstein D.M."/>
            <person name="Hawkins T."/>
            <person name="Plengvidhya V."/>
            <person name="Welker D."/>
            <person name="Hughes J."/>
            <person name="Goh Y."/>
            <person name="Benson A."/>
            <person name="Baldwin K."/>
            <person name="Lee J.-H."/>
            <person name="Diaz-Muniz I."/>
            <person name="Dosti B."/>
            <person name="Smeianov V."/>
            <person name="Wechter W."/>
            <person name="Barabote R."/>
            <person name="Lorca G."/>
            <person name="Altermann E."/>
            <person name="Barrangou R."/>
            <person name="Ganesan B."/>
            <person name="Xie Y."/>
            <person name="Rawsthorne H."/>
            <person name="Tamir D."/>
            <person name="Parker C."/>
            <person name="Breidt F."/>
            <person name="Broadbent J.R."/>
            <person name="Hutkins R."/>
            <person name="O'Sullivan D."/>
            <person name="Steele J."/>
            <person name="Unlu G."/>
            <person name="Saier M.H. Jr."/>
            <person name="Klaenhammer T."/>
            <person name="Richardson P."/>
            <person name="Kozyavkin S."/>
            <person name="Weimer B.C."/>
            <person name="Mills D.A."/>
        </authorList>
    </citation>
    <scope>NUCLEOTIDE SEQUENCE [LARGE SCALE GENOMIC DNA]</scope>
    <source>
        <strain>ATCC 8293 / DSM 20343 / BCRC 11652 / CCM 1803 / JCM 6124 / NCDO 523 / NBRC 100496 / NCIMB 8023 / NCTC 12954 / NRRL B-1118 / 37Y</strain>
    </source>
</reference>
<accession>Q03VX9</accession>
<keyword id="KW-0028">Amino-acid biosynthesis</keyword>
<keyword id="KW-0963">Cytoplasm</keyword>
<keyword id="KW-0368">Histidine biosynthesis</keyword>
<keyword id="KW-0413">Isomerase</keyword>
<keyword id="KW-1185">Reference proteome</keyword>
<feature type="chain" id="PRO_0000290488" description="1-(5-phosphoribosyl)-5-[(5-phosphoribosylamino)methylideneamino] imidazole-4-carboxamide isomerase">
    <location>
        <begin position="1"/>
        <end position="238"/>
    </location>
</feature>
<feature type="active site" description="Proton acceptor" evidence="1">
    <location>
        <position position="7"/>
    </location>
</feature>
<feature type="active site" description="Proton donor" evidence="1">
    <location>
        <position position="129"/>
    </location>
</feature>
<evidence type="ECO:0000255" key="1">
    <source>
        <dbReference type="HAMAP-Rule" id="MF_01014"/>
    </source>
</evidence>
<proteinExistence type="inferred from homology"/>
<comment type="catalytic activity">
    <reaction evidence="1">
        <text>1-(5-phospho-beta-D-ribosyl)-5-[(5-phospho-beta-D-ribosylamino)methylideneamino]imidazole-4-carboxamide = 5-[(5-phospho-1-deoxy-D-ribulos-1-ylimino)methylamino]-1-(5-phospho-beta-D-ribosyl)imidazole-4-carboxamide</text>
        <dbReference type="Rhea" id="RHEA:15469"/>
        <dbReference type="ChEBI" id="CHEBI:58435"/>
        <dbReference type="ChEBI" id="CHEBI:58525"/>
        <dbReference type="EC" id="5.3.1.16"/>
    </reaction>
</comment>
<comment type="pathway">
    <text evidence="1">Amino-acid biosynthesis; L-histidine biosynthesis; L-histidine from 5-phospho-alpha-D-ribose 1-diphosphate: step 4/9.</text>
</comment>
<comment type="subcellular location">
    <subcellularLocation>
        <location evidence="1">Cytoplasm</location>
    </subcellularLocation>
</comment>
<comment type="similarity">
    <text evidence="1">Belongs to the HisA/HisF family.</text>
</comment>
<name>HIS4_LEUMM</name>